<name>DLTA_STAAM</name>
<dbReference type="EC" id="6.2.1.54" evidence="1"/>
<dbReference type="EMBL" id="BA000017">
    <property type="protein sequence ID" value="BAB57094.1"/>
    <property type="molecule type" value="Genomic_DNA"/>
</dbReference>
<dbReference type="RefSeq" id="WP_000129659.1">
    <property type="nucleotide sequence ID" value="NC_002758.2"/>
</dbReference>
<dbReference type="PDB" id="7VHV">
    <property type="method" value="X-ray"/>
    <property type="resolution" value="2.55 A"/>
    <property type="chains" value="A/B/C/D=1-485"/>
</dbReference>
<dbReference type="PDBsum" id="7VHV"/>
<dbReference type="SMR" id="P68876"/>
<dbReference type="KEGG" id="sav:SAV0932"/>
<dbReference type="HOGENOM" id="CLU_000022_2_12_9"/>
<dbReference type="PhylomeDB" id="P68876"/>
<dbReference type="UniPathway" id="UPA00556"/>
<dbReference type="Proteomes" id="UP000002481">
    <property type="component" value="Chromosome"/>
</dbReference>
<dbReference type="GO" id="GO:0005737">
    <property type="term" value="C:cytoplasm"/>
    <property type="evidence" value="ECO:0007669"/>
    <property type="project" value="UniProtKB-SubCell"/>
</dbReference>
<dbReference type="GO" id="GO:0005524">
    <property type="term" value="F:ATP binding"/>
    <property type="evidence" value="ECO:0007669"/>
    <property type="project" value="UniProtKB-KW"/>
</dbReference>
<dbReference type="GO" id="GO:0047473">
    <property type="term" value="F:D-alanine [D-alanyl carrier protein] ligase activity"/>
    <property type="evidence" value="ECO:0007669"/>
    <property type="project" value="UniProtKB-UniRule"/>
</dbReference>
<dbReference type="GO" id="GO:0070395">
    <property type="term" value="P:lipoteichoic acid biosynthetic process"/>
    <property type="evidence" value="ECO:0007669"/>
    <property type="project" value="UniProtKB-UniRule"/>
</dbReference>
<dbReference type="CDD" id="cd05945">
    <property type="entry name" value="DltA"/>
    <property type="match status" value="1"/>
</dbReference>
<dbReference type="FunFam" id="3.30.300.30:FF:000012">
    <property type="entry name" value="D-alanine--D-alanyl carrier protein ligase"/>
    <property type="match status" value="1"/>
</dbReference>
<dbReference type="Gene3D" id="3.30.300.30">
    <property type="match status" value="1"/>
</dbReference>
<dbReference type="Gene3D" id="3.40.50.12780">
    <property type="entry name" value="N-terminal domain of ligase-like"/>
    <property type="match status" value="1"/>
</dbReference>
<dbReference type="HAMAP" id="MF_00593">
    <property type="entry name" value="DltA"/>
    <property type="match status" value="1"/>
</dbReference>
<dbReference type="InterPro" id="IPR010071">
    <property type="entry name" value="AA_adenyl_dom"/>
</dbReference>
<dbReference type="InterPro" id="IPR025110">
    <property type="entry name" value="AMP-bd_C"/>
</dbReference>
<dbReference type="InterPro" id="IPR045851">
    <property type="entry name" value="AMP-bd_C_sf"/>
</dbReference>
<dbReference type="InterPro" id="IPR000873">
    <property type="entry name" value="AMP-dep_synth/lig_dom"/>
</dbReference>
<dbReference type="InterPro" id="IPR042099">
    <property type="entry name" value="ANL_N_sf"/>
</dbReference>
<dbReference type="InterPro" id="IPR010072">
    <property type="entry name" value="DltA"/>
</dbReference>
<dbReference type="InterPro" id="IPR044507">
    <property type="entry name" value="DltA-like"/>
</dbReference>
<dbReference type="NCBIfam" id="TIGR01733">
    <property type="entry name" value="AA-adenyl-dom"/>
    <property type="match status" value="1"/>
</dbReference>
<dbReference type="NCBIfam" id="TIGR01734">
    <property type="entry name" value="D-ala-DACP-lig"/>
    <property type="match status" value="1"/>
</dbReference>
<dbReference type="NCBIfam" id="NF003417">
    <property type="entry name" value="PRK04813.1"/>
    <property type="match status" value="1"/>
</dbReference>
<dbReference type="PANTHER" id="PTHR45398">
    <property type="match status" value="1"/>
</dbReference>
<dbReference type="PANTHER" id="PTHR45398:SF1">
    <property type="entry name" value="ENZYME, PUTATIVE (JCVI)-RELATED"/>
    <property type="match status" value="1"/>
</dbReference>
<dbReference type="Pfam" id="PF00501">
    <property type="entry name" value="AMP-binding"/>
    <property type="match status" value="1"/>
</dbReference>
<dbReference type="Pfam" id="PF13193">
    <property type="entry name" value="AMP-binding_C"/>
    <property type="match status" value="1"/>
</dbReference>
<dbReference type="SUPFAM" id="SSF56801">
    <property type="entry name" value="Acetyl-CoA synthetase-like"/>
    <property type="match status" value="1"/>
</dbReference>
<feature type="chain" id="PRO_0000213150" description="D-alanine--D-alanyl carrier protein ligase">
    <location>
        <begin position="1"/>
        <end position="485"/>
    </location>
</feature>
<feature type="binding site" evidence="1">
    <location>
        <begin position="144"/>
        <end position="145"/>
    </location>
    <ligand>
        <name>ATP</name>
        <dbReference type="ChEBI" id="CHEBI:30616"/>
    </ligand>
</feature>
<feature type="binding site" evidence="1">
    <location>
        <position position="189"/>
    </location>
    <ligand>
        <name>D-alanine</name>
        <dbReference type="ChEBI" id="CHEBI:57416"/>
    </ligand>
</feature>
<feature type="binding site" evidence="1">
    <location>
        <begin position="284"/>
        <end position="289"/>
    </location>
    <ligand>
        <name>ATP</name>
        <dbReference type="ChEBI" id="CHEBI:30616"/>
    </ligand>
</feature>
<feature type="binding site" evidence="1">
    <location>
        <position position="293"/>
    </location>
    <ligand>
        <name>D-alanine</name>
        <dbReference type="ChEBI" id="CHEBI:57416"/>
    </ligand>
</feature>
<feature type="binding site" evidence="1">
    <location>
        <position position="365"/>
    </location>
    <ligand>
        <name>ATP</name>
        <dbReference type="ChEBI" id="CHEBI:30616"/>
    </ligand>
</feature>
<feature type="binding site" evidence="1">
    <location>
        <position position="473"/>
    </location>
    <ligand>
        <name>ATP</name>
        <dbReference type="ChEBI" id="CHEBI:30616"/>
    </ligand>
</feature>
<feature type="binding site" evidence="1">
    <location>
        <position position="473"/>
    </location>
    <ligand>
        <name>D-alanine</name>
        <dbReference type="ChEBI" id="CHEBI:57416"/>
    </ligand>
</feature>
<feature type="helix" evidence="2">
    <location>
        <begin position="4"/>
        <end position="14"/>
    </location>
</feature>
<feature type="strand" evidence="2">
    <location>
        <begin position="18"/>
        <end position="23"/>
    </location>
</feature>
<feature type="strand" evidence="2">
    <location>
        <begin position="26"/>
        <end position="29"/>
    </location>
</feature>
<feature type="helix" evidence="2">
    <location>
        <begin position="30"/>
        <end position="44"/>
    </location>
</feature>
<feature type="strand" evidence="2">
    <location>
        <begin position="51"/>
        <end position="57"/>
    </location>
</feature>
<feature type="helix" evidence="2">
    <location>
        <begin position="60"/>
        <end position="71"/>
    </location>
</feature>
<feature type="strand" evidence="2">
    <location>
        <begin position="75"/>
        <end position="79"/>
    </location>
</feature>
<feature type="helix" evidence="2">
    <location>
        <begin position="84"/>
        <end position="94"/>
    </location>
</feature>
<feature type="strand" evidence="2">
    <location>
        <begin position="97"/>
        <end position="101"/>
    </location>
</feature>
<feature type="strand" evidence="2">
    <location>
        <begin position="103"/>
        <end position="105"/>
    </location>
</feature>
<feature type="strand" evidence="2">
    <location>
        <begin position="110"/>
        <end position="116"/>
    </location>
</feature>
<feature type="helix" evidence="2">
    <location>
        <begin position="117"/>
        <end position="121"/>
    </location>
</feature>
<feature type="strand" evidence="2">
    <location>
        <begin position="137"/>
        <end position="143"/>
    </location>
</feature>
<feature type="strand" evidence="2">
    <location>
        <begin position="148"/>
        <end position="150"/>
    </location>
</feature>
<feature type="strand" evidence="2">
    <location>
        <begin position="153"/>
        <end position="157"/>
    </location>
</feature>
<feature type="helix" evidence="2">
    <location>
        <begin position="158"/>
        <end position="171"/>
    </location>
</feature>
<feature type="strand" evidence="2">
    <location>
        <begin position="179"/>
        <end position="182"/>
    </location>
</feature>
<feature type="helix" evidence="2">
    <location>
        <begin position="190"/>
        <end position="199"/>
    </location>
</feature>
<feature type="turn" evidence="2">
    <location>
        <begin position="200"/>
        <end position="202"/>
    </location>
</feature>
<feature type="strand" evidence="2">
    <location>
        <begin position="204"/>
        <end position="207"/>
    </location>
</feature>
<feature type="helix" evidence="2">
    <location>
        <begin position="210"/>
        <end position="214"/>
    </location>
</feature>
<feature type="helix" evidence="2">
    <location>
        <begin position="216"/>
        <end position="225"/>
    </location>
</feature>
<feature type="strand" evidence="2">
    <location>
        <begin position="230"/>
        <end position="233"/>
    </location>
</feature>
<feature type="helix" evidence="2">
    <location>
        <begin position="235"/>
        <end position="241"/>
    </location>
</feature>
<feature type="turn" evidence="2">
    <location>
        <begin position="249"/>
        <end position="251"/>
    </location>
</feature>
<feature type="strand" evidence="2">
    <location>
        <begin position="257"/>
        <end position="263"/>
    </location>
</feature>
<feature type="helix" evidence="2">
    <location>
        <begin position="267"/>
        <end position="276"/>
    </location>
</feature>
<feature type="strand" evidence="2">
    <location>
        <begin position="281"/>
        <end position="286"/>
    </location>
</feature>
<feature type="helix" evidence="2">
    <location>
        <begin position="289"/>
        <end position="291"/>
    </location>
</feature>
<feature type="strand" evidence="2">
    <location>
        <begin position="295"/>
        <end position="299"/>
    </location>
</feature>
<feature type="helix" evidence="2">
    <location>
        <begin position="302"/>
        <end position="307"/>
    </location>
</feature>
<feature type="strand" evidence="2">
    <location>
        <begin position="314"/>
        <end position="316"/>
    </location>
</feature>
<feature type="strand" evidence="2">
    <location>
        <begin position="321"/>
        <end position="324"/>
    </location>
</feature>
<feature type="strand" evidence="2">
    <location>
        <begin position="328"/>
        <end position="334"/>
    </location>
</feature>
<feature type="strand" evidence="2">
    <location>
        <begin position="340"/>
        <end position="343"/>
    </location>
</feature>
<feature type="helix" evidence="2">
    <location>
        <begin position="345"/>
        <end position="351"/>
    </location>
</feature>
<feature type="helix" evidence="2">
    <location>
        <begin position="355"/>
        <end position="357"/>
    </location>
</feature>
<feature type="strand" evidence="2">
    <location>
        <begin position="360"/>
        <end position="370"/>
    </location>
</feature>
<feature type="strand" evidence="2">
    <location>
        <begin position="373"/>
        <end position="379"/>
    </location>
</feature>
<feature type="helix" evidence="2">
    <location>
        <begin position="380"/>
        <end position="382"/>
    </location>
</feature>
<feature type="strand" evidence="2">
    <location>
        <begin position="384"/>
        <end position="386"/>
    </location>
</feature>
<feature type="strand" evidence="2">
    <location>
        <begin position="389"/>
        <end position="391"/>
    </location>
</feature>
<feature type="helix" evidence="2">
    <location>
        <begin position="393"/>
        <end position="401"/>
    </location>
</feature>
<feature type="strand" evidence="2">
    <location>
        <begin position="406"/>
        <end position="430"/>
    </location>
</feature>
<feature type="strand" evidence="2">
    <location>
        <begin position="436"/>
        <end position="438"/>
    </location>
</feature>
<feature type="helix" evidence="2">
    <location>
        <begin position="440"/>
        <end position="450"/>
    </location>
</feature>
<feature type="helix" evidence="2">
    <location>
        <begin position="453"/>
        <end position="455"/>
    </location>
</feature>
<feature type="strand" evidence="2">
    <location>
        <begin position="458"/>
        <end position="462"/>
    </location>
</feature>
<feature type="strand" evidence="2">
    <location>
        <begin position="472"/>
        <end position="474"/>
    </location>
</feature>
<feature type="helix" evidence="2">
    <location>
        <begin position="476"/>
        <end position="483"/>
    </location>
</feature>
<reference key="1">
    <citation type="journal article" date="2001" name="Lancet">
        <title>Whole genome sequencing of meticillin-resistant Staphylococcus aureus.</title>
        <authorList>
            <person name="Kuroda M."/>
            <person name="Ohta T."/>
            <person name="Uchiyama I."/>
            <person name="Baba T."/>
            <person name="Yuzawa H."/>
            <person name="Kobayashi I."/>
            <person name="Cui L."/>
            <person name="Oguchi A."/>
            <person name="Aoki K."/>
            <person name="Nagai Y."/>
            <person name="Lian J.-Q."/>
            <person name="Ito T."/>
            <person name="Kanamori M."/>
            <person name="Matsumaru H."/>
            <person name="Maruyama A."/>
            <person name="Murakami H."/>
            <person name="Hosoyama A."/>
            <person name="Mizutani-Ui Y."/>
            <person name="Takahashi N.K."/>
            <person name="Sawano T."/>
            <person name="Inoue R."/>
            <person name="Kaito C."/>
            <person name="Sekimizu K."/>
            <person name="Hirakawa H."/>
            <person name="Kuhara S."/>
            <person name="Goto S."/>
            <person name="Yabuzaki J."/>
            <person name="Kanehisa M."/>
            <person name="Yamashita A."/>
            <person name="Oshima K."/>
            <person name="Furuya K."/>
            <person name="Yoshino C."/>
            <person name="Shiba T."/>
            <person name="Hattori M."/>
            <person name="Ogasawara N."/>
            <person name="Hayashi H."/>
            <person name="Hiramatsu K."/>
        </authorList>
    </citation>
    <scope>NUCLEOTIDE SEQUENCE [LARGE SCALE GENOMIC DNA]</scope>
    <source>
        <strain>Mu50 / ATCC 700699</strain>
    </source>
</reference>
<comment type="function">
    <text evidence="1">Catalyzes the first step in the D-alanylation of lipoteichoic acid (LTA), the activation of D-alanine and its transfer onto the D-alanyl carrier protein (Dcp) DltC. In an ATP-dependent two-step reaction, forms a high energy D-alanyl-AMP intermediate, followed by transfer of the D-alanyl residue as a thiol ester to the phosphopantheinyl prosthetic group of the Dcp. D-alanylation of LTA plays an important role in modulating the properties of the cell wall in Gram-positive bacteria, influencing the net charge of the cell wall.</text>
</comment>
<comment type="catalytic activity">
    <reaction evidence="1">
        <text>holo-[D-alanyl-carrier protein] + D-alanine + ATP = D-alanyl-[D-alanyl-carrier protein] + AMP + diphosphate</text>
        <dbReference type="Rhea" id="RHEA:55132"/>
        <dbReference type="Rhea" id="RHEA-COMP:14102"/>
        <dbReference type="Rhea" id="RHEA-COMP:14103"/>
        <dbReference type="ChEBI" id="CHEBI:30616"/>
        <dbReference type="ChEBI" id="CHEBI:33019"/>
        <dbReference type="ChEBI" id="CHEBI:57416"/>
        <dbReference type="ChEBI" id="CHEBI:64479"/>
        <dbReference type="ChEBI" id="CHEBI:138620"/>
        <dbReference type="ChEBI" id="CHEBI:456215"/>
        <dbReference type="EC" id="6.2.1.54"/>
    </reaction>
</comment>
<comment type="pathway">
    <text evidence="1">Cell wall biogenesis; lipoteichoic acid biosynthesis.</text>
</comment>
<comment type="subcellular location">
    <subcellularLocation>
        <location evidence="1">Cytoplasm</location>
    </subcellularLocation>
</comment>
<comment type="similarity">
    <text evidence="1">Belongs to the ATP-dependent AMP-binding enzyme family. DltA subfamily.</text>
</comment>
<accession>P68876</accession>
<accession>Q53661</accession>
<protein>
    <recommendedName>
        <fullName evidence="1">D-alanine--D-alanyl carrier protein ligase</fullName>
        <shortName evidence="1">DCL</shortName>
        <ecNumber evidence="1">6.2.1.54</ecNumber>
    </recommendedName>
    <alternativeName>
        <fullName evidence="1">D-alanine--poly(phosphoribitol) ligase subunit 1</fullName>
    </alternativeName>
    <alternativeName>
        <fullName evidence="1">D-alanine-activating enzyme</fullName>
        <shortName evidence="1">DAE</shortName>
    </alternativeName>
</protein>
<organism>
    <name type="scientific">Staphylococcus aureus (strain Mu50 / ATCC 700699)</name>
    <dbReference type="NCBI Taxonomy" id="158878"/>
    <lineage>
        <taxon>Bacteria</taxon>
        <taxon>Bacillati</taxon>
        <taxon>Bacillota</taxon>
        <taxon>Bacilli</taxon>
        <taxon>Bacillales</taxon>
        <taxon>Staphylococcaceae</taxon>
        <taxon>Staphylococcus</taxon>
    </lineage>
</organism>
<gene>
    <name evidence="1" type="primary">dltA</name>
    <name type="ordered locus">SAV0932</name>
</gene>
<sequence>MTDIINKLQAFADANPQSIAVRHTTDELTYQQLMDESSKLAHRLQGSKKPMILFGHMSPYMIVGMIGAIKAGCGYVPVDTSIPEDRIKMIINKVQPEFVFNTTDESFESLEGEVFTIEDIKTSQDPVIFDSQIKDNDTVYTIFTSGSTGEPKGVQIEYASLVQFTEWMLELNKSGNKQQWLNQAPFSFDLSVMAIYPCLASGGTLNLVDKNMINKPKLLNEMLTATPINIWVSTPSFMEMCLLLPTLNEEQYGSLNEFFFCGEILPHRAAKALVSRFPSATIYNTYGPTEATVAVTSIQITQEILDQYPTLPVGVERLGARLSTTDDGELVIEGQSVSLGYLKNDQKTAEVFNFDDGIRTYHTGDKAKFENGQWFIQGRIDFQIKLNGYRMELEEIETQLRQSEFVKEAIVVPVYKNDKVIHLIGAIVPTTEVTDNAEMTKNIKNDLKSRLPEYMIPRKFEWMEQLPLTSNGKIDRKKIAEVING</sequence>
<keyword id="KW-0002">3D-structure</keyword>
<keyword id="KW-0067">ATP-binding</keyword>
<keyword id="KW-0963">Cytoplasm</keyword>
<keyword id="KW-0436">Ligase</keyword>
<keyword id="KW-0547">Nucleotide-binding</keyword>
<proteinExistence type="evidence at protein level"/>
<evidence type="ECO:0000255" key="1">
    <source>
        <dbReference type="HAMAP-Rule" id="MF_00593"/>
    </source>
</evidence>
<evidence type="ECO:0007829" key="2">
    <source>
        <dbReference type="PDB" id="7VHV"/>
    </source>
</evidence>